<sequence length="158" mass="17622">MTSPNILLTRIDNRLVHGQVGVTWTSTIGANLLVVVDDVVANDDIQQKLMGITAETYGFGIRFFTIEKTINVIGKAAPHQKIFLICRTPQTVRKLVEGGIDLKDVNVGNMHFSEGKKQISSKVYVDDQDLTDLRFIKQRGVNVFIQDVPGDQKEQIPD</sequence>
<accession>P42909</accession>
<accession>Q2M972</accession>
<dbReference type="EC" id="2.7.1.-"/>
<dbReference type="EMBL" id="AF228498">
    <property type="protein sequence ID" value="AAF81090.1"/>
    <property type="molecule type" value="Genomic_DNA"/>
</dbReference>
<dbReference type="EMBL" id="U18997">
    <property type="protein sequence ID" value="AAA57941.1"/>
    <property type="molecule type" value="Genomic_DNA"/>
</dbReference>
<dbReference type="EMBL" id="U00096">
    <property type="protein sequence ID" value="AAC76172.1"/>
    <property type="molecule type" value="Genomic_DNA"/>
</dbReference>
<dbReference type="EMBL" id="AP009048">
    <property type="protein sequence ID" value="BAE77184.1"/>
    <property type="molecule type" value="Genomic_DNA"/>
</dbReference>
<dbReference type="PIR" id="F65103">
    <property type="entry name" value="F65103"/>
</dbReference>
<dbReference type="RefSeq" id="NP_417607.1">
    <property type="nucleotide sequence ID" value="NC_000913.3"/>
</dbReference>
<dbReference type="RefSeq" id="WP_000203711.1">
    <property type="nucleotide sequence ID" value="NZ_LN832404.1"/>
</dbReference>
<dbReference type="SMR" id="P42909"/>
<dbReference type="BioGRID" id="4259399">
    <property type="interactions" value="18"/>
</dbReference>
<dbReference type="FunCoup" id="P42909">
    <property type="interactions" value="230"/>
</dbReference>
<dbReference type="IntAct" id="P42909">
    <property type="interactions" value="5"/>
</dbReference>
<dbReference type="STRING" id="511145.b3138"/>
<dbReference type="TCDB" id="4.A.6.1.5">
    <property type="family name" value="the pts mannose-fructose-sorbose (man) family"/>
</dbReference>
<dbReference type="PaxDb" id="511145-b3138"/>
<dbReference type="EnsemblBacteria" id="AAC76172">
    <property type="protein sequence ID" value="AAC76172"/>
    <property type="gene ID" value="b3138"/>
</dbReference>
<dbReference type="GeneID" id="947653"/>
<dbReference type="KEGG" id="ecj:JW3107"/>
<dbReference type="KEGG" id="eco:b3138"/>
<dbReference type="KEGG" id="ecoc:C3026_17100"/>
<dbReference type="PATRIC" id="fig|1411691.4.peg.3592"/>
<dbReference type="EchoBASE" id="EB2622"/>
<dbReference type="eggNOG" id="COG3444">
    <property type="taxonomic scope" value="Bacteria"/>
</dbReference>
<dbReference type="HOGENOM" id="CLU_116175_2_1_6"/>
<dbReference type="InParanoid" id="P42909"/>
<dbReference type="OMA" id="DSHDFMK"/>
<dbReference type="OrthoDB" id="7065728at2"/>
<dbReference type="PhylomeDB" id="P42909"/>
<dbReference type="BioCyc" id="EcoCyc:AGAB-MONOMER"/>
<dbReference type="PRO" id="PR:P42909"/>
<dbReference type="Proteomes" id="UP000000625">
    <property type="component" value="Chromosome"/>
</dbReference>
<dbReference type="GO" id="GO:0005737">
    <property type="term" value="C:cytoplasm"/>
    <property type="evidence" value="ECO:0007669"/>
    <property type="project" value="UniProtKB-SubCell"/>
</dbReference>
<dbReference type="GO" id="GO:0016301">
    <property type="term" value="F:kinase activity"/>
    <property type="evidence" value="ECO:0007669"/>
    <property type="project" value="UniProtKB-KW"/>
</dbReference>
<dbReference type="GO" id="GO:0008982">
    <property type="term" value="F:protein-N(PI)-phosphohistidine-sugar phosphotransferase activity"/>
    <property type="evidence" value="ECO:0007669"/>
    <property type="project" value="InterPro"/>
</dbReference>
<dbReference type="GO" id="GO:0009401">
    <property type="term" value="P:phosphoenolpyruvate-dependent sugar phosphotransferase system"/>
    <property type="evidence" value="ECO:0007669"/>
    <property type="project" value="UniProtKB-KW"/>
</dbReference>
<dbReference type="CDD" id="cd00001">
    <property type="entry name" value="PTS_IIB_man"/>
    <property type="match status" value="1"/>
</dbReference>
<dbReference type="Gene3D" id="3.40.35.10">
    <property type="entry name" value="Phosphotransferase system, sorbose subfamily IIB component"/>
    <property type="match status" value="1"/>
</dbReference>
<dbReference type="InterPro" id="IPR004720">
    <property type="entry name" value="PTS_IIB_sorbose-sp"/>
</dbReference>
<dbReference type="InterPro" id="IPR036667">
    <property type="entry name" value="PTS_IIB_sorbose-sp_sf"/>
</dbReference>
<dbReference type="InterPro" id="IPR018455">
    <property type="entry name" value="PTS_IIB_sorbose-sp_subgr"/>
</dbReference>
<dbReference type="NCBIfam" id="NF007288">
    <property type="entry name" value="PRK09756.1"/>
    <property type="match status" value="1"/>
</dbReference>
<dbReference type="NCBIfam" id="NF008508">
    <property type="entry name" value="PRK11425.1"/>
    <property type="match status" value="1"/>
</dbReference>
<dbReference type="NCBIfam" id="TIGR00854">
    <property type="entry name" value="pts-sorbose"/>
    <property type="match status" value="1"/>
</dbReference>
<dbReference type="Pfam" id="PF03830">
    <property type="entry name" value="PTSIIB_sorb"/>
    <property type="match status" value="1"/>
</dbReference>
<dbReference type="SUPFAM" id="SSF52728">
    <property type="entry name" value="PTS IIb component"/>
    <property type="match status" value="1"/>
</dbReference>
<dbReference type="PROSITE" id="PS51101">
    <property type="entry name" value="PTS_EIIB_TYPE_4"/>
    <property type="match status" value="1"/>
</dbReference>
<comment type="function">
    <text>The phosphoenolpyruvate-dependent sugar phosphotransferase system (sugar PTS), a major carbohydrate active -transport system, catalyzes the phosphorylation of incoming sugar substrates concomitantly with their translocation across the cell membrane. This system is involved in N-acetylgalactosamine transport.</text>
</comment>
<comment type="subcellular location">
    <subcellularLocation>
        <location evidence="3">Cytoplasm</location>
    </subcellularLocation>
</comment>
<comment type="domain">
    <text>The EIIB domain is phosphorylated by phospho-EIIA on a cysteinyl or histidyl residue, depending on the transported sugar. Then, it transfers the phosphoryl group to the sugar substrate concomitantly with the sugar uptake processed by the EIIC domain.</text>
</comment>
<name>PTPB1_ECOLI</name>
<feature type="chain" id="PRO_0000186658" description="N-acetylgalactosamine-specific phosphotransferase enzyme IIB component 1">
    <location>
        <begin position="1"/>
        <end position="158"/>
    </location>
</feature>
<feature type="domain" description="PTS EIIB type-4" evidence="2">
    <location>
        <begin position="1"/>
        <end position="158"/>
    </location>
</feature>
<feature type="active site" description="Pros-phosphohistidine intermediate" evidence="1">
    <location>
        <position position="17"/>
    </location>
</feature>
<evidence type="ECO:0000250" key="1"/>
<evidence type="ECO:0000255" key="2">
    <source>
        <dbReference type="PROSITE-ProRule" id="PRU00424"/>
    </source>
</evidence>
<evidence type="ECO:0000305" key="3"/>
<gene>
    <name type="primary">agaB</name>
    <name type="synonym">yraD</name>
    <name type="ordered locus">b3138</name>
    <name type="ordered locus">JW3107</name>
</gene>
<protein>
    <recommendedName>
        <fullName>N-acetylgalactosamine-specific phosphotransferase enzyme IIB component 1</fullName>
        <ecNumber>2.7.1.-</ecNumber>
    </recommendedName>
    <alternativeName>
        <fullName>EIIB-Aga</fullName>
    </alternativeName>
    <alternativeName>
        <fullName>PTS system N-acetylgalactosamine-specific EIIB component 1</fullName>
    </alternativeName>
</protein>
<keyword id="KW-0963">Cytoplasm</keyword>
<keyword id="KW-0418">Kinase</keyword>
<keyword id="KW-0598">Phosphotransferase system</keyword>
<keyword id="KW-1185">Reference proteome</keyword>
<keyword id="KW-0762">Sugar transport</keyword>
<keyword id="KW-0808">Transferase</keyword>
<keyword id="KW-0813">Transport</keyword>
<proteinExistence type="predicted"/>
<reference key="1">
    <citation type="journal article" date="2000" name="Mol. Microbiol.">
        <title>Pathways for the utilization of N-acetyl-galactosamine and galactosamine in Escherichia coli.</title>
        <authorList>
            <person name="Brinkkoetter A."/>
            <person name="Kloess H."/>
            <person name="Alpert C.-A."/>
            <person name="Lengeler J.W."/>
        </authorList>
    </citation>
    <scope>NUCLEOTIDE SEQUENCE [GENOMIC DNA]</scope>
    <source>
        <strain>C</strain>
    </source>
</reference>
<reference key="2">
    <citation type="journal article" date="1997" name="Science">
        <title>The complete genome sequence of Escherichia coli K-12.</title>
        <authorList>
            <person name="Blattner F.R."/>
            <person name="Plunkett G. III"/>
            <person name="Bloch C.A."/>
            <person name="Perna N.T."/>
            <person name="Burland V."/>
            <person name="Riley M."/>
            <person name="Collado-Vides J."/>
            <person name="Glasner J.D."/>
            <person name="Rode C.K."/>
            <person name="Mayhew G.F."/>
            <person name="Gregor J."/>
            <person name="Davis N.W."/>
            <person name="Kirkpatrick H.A."/>
            <person name="Goeden M.A."/>
            <person name="Rose D.J."/>
            <person name="Mau B."/>
            <person name="Shao Y."/>
        </authorList>
    </citation>
    <scope>NUCLEOTIDE SEQUENCE [LARGE SCALE GENOMIC DNA]</scope>
    <source>
        <strain>K12 / MG1655 / ATCC 47076</strain>
    </source>
</reference>
<reference key="3">
    <citation type="journal article" date="2006" name="Mol. Syst. Biol.">
        <title>Highly accurate genome sequences of Escherichia coli K-12 strains MG1655 and W3110.</title>
        <authorList>
            <person name="Hayashi K."/>
            <person name="Morooka N."/>
            <person name="Yamamoto Y."/>
            <person name="Fujita K."/>
            <person name="Isono K."/>
            <person name="Choi S."/>
            <person name="Ohtsubo E."/>
            <person name="Baba T."/>
            <person name="Wanner B.L."/>
            <person name="Mori H."/>
            <person name="Horiuchi T."/>
        </authorList>
    </citation>
    <scope>NUCLEOTIDE SEQUENCE [LARGE SCALE GENOMIC DNA]</scope>
    <source>
        <strain>K12 / W3110 / ATCC 27325 / DSM 5911</strain>
    </source>
</reference>
<reference key="4">
    <citation type="journal article" date="1996" name="Microbiology">
        <title>Novel phosphotransferase genes revealed by bacterial genome sequencing: a gene cluster encoding a putative N-acetylgalactosamine metabolic pathway in Escherichia coli.</title>
        <authorList>
            <person name="Reizer J."/>
            <person name="Ramseier T.M."/>
            <person name="Reizer A."/>
            <person name="Charbit A."/>
            <person name="Saier M.H. Jr."/>
        </authorList>
    </citation>
    <scope>DISCUSSION OF SEQUENCE</scope>
</reference>
<organism>
    <name type="scientific">Escherichia coli (strain K12)</name>
    <dbReference type="NCBI Taxonomy" id="83333"/>
    <lineage>
        <taxon>Bacteria</taxon>
        <taxon>Pseudomonadati</taxon>
        <taxon>Pseudomonadota</taxon>
        <taxon>Gammaproteobacteria</taxon>
        <taxon>Enterobacterales</taxon>
        <taxon>Enterobacteriaceae</taxon>
        <taxon>Escherichia</taxon>
    </lineage>
</organism>